<keyword id="KW-0256">Endoplasmic reticulum</keyword>
<keyword id="KW-0325">Glycoprotein</keyword>
<keyword id="KW-0472">Membrane</keyword>
<keyword id="KW-0597">Phosphoprotein</keyword>
<keyword id="KW-1267">Proteomics identification</keyword>
<keyword id="KW-1185">Reference proteome</keyword>
<keyword id="KW-0732">Signal</keyword>
<keyword id="KW-0812">Transmembrane</keyword>
<keyword id="KW-1133">Transmembrane helix</keyword>
<evidence type="ECO:0000250" key="1">
    <source>
        <dbReference type="UniProtKB" id="Q6GQT9"/>
    </source>
</evidence>
<evidence type="ECO:0000255" key="2"/>
<evidence type="ECO:0000256" key="3">
    <source>
        <dbReference type="SAM" id="MobiDB-lite"/>
    </source>
</evidence>
<evidence type="ECO:0000269" key="4">
    <source>
    </source>
</evidence>
<evidence type="ECO:0000269" key="5">
    <source>
    </source>
</evidence>
<evidence type="ECO:0000269" key="6">
    <source>
    </source>
</evidence>
<evidence type="ECO:0000269" key="7">
    <source>
    </source>
</evidence>
<evidence type="ECO:0000269" key="8">
    <source>
    </source>
</evidence>
<evidence type="ECO:0000269" key="9">
    <source>
    </source>
</evidence>
<evidence type="ECO:0000269" key="10">
    <source>
    </source>
</evidence>
<evidence type="ECO:0000269" key="11">
    <source>
    </source>
</evidence>
<evidence type="ECO:0000269" key="12">
    <source>
    </source>
</evidence>
<evidence type="ECO:0000305" key="13"/>
<proteinExistence type="evidence at protein level"/>
<name>NOMO1_HUMAN</name>
<comment type="function">
    <text evidence="11 12">Component of the multi-pass translocon (MPT) complex that mediates insertion of multi-pass membrane proteins into the lipid bilayer of membranes (PubMed:32820719, PubMed:36261522). The MPT complex takes over after the SEC61 complex: following membrane insertion of the first few transmembrane segments of proteins by the SEC61 complex, the MPT complex occludes the lateral gate of the SEC61 complex to promote insertion of subsequent transmembrane regions (PubMed:36261522).</text>
</comment>
<comment type="subunit">
    <text evidence="10 11 12">Component of the back of Sec61 (BOS) complex, composed of NCLN/Nicalin, NOMO (NOMO1, NOMO2 or NOMO3) and TMEM147 (PubMed:20538592, PubMed:36261522). The BOS complex is part of the multi-pass translocon (MPT) complex, composed of three subcomplexes, the GEL complex (composed of RAB5IF/OPTI and TMCO1), the BOS complex (composed of NCLN/Nicalin, NOMO and TMEM147) and the PAT complex (composed of WDR83OS/Asterix and CCDC47) (PubMed:32820719, PubMed:36261522). The MPT complex associates with the SEC61 complex (PubMed:32820719, PubMed:36261522). Due to the strong similarity between NOMO1, NOMO2 and NOMO3, similar interaction pattern probably occur for the three gene copies (PubMed:20538592, PubMed:32820719).</text>
</comment>
<comment type="subcellular location">
    <subcellularLocation>
        <location evidence="8 12">Endoplasmic reticulum membrane</location>
        <topology evidence="13">Single-pass type I membrane protein</topology>
    </subcellularLocation>
</comment>
<comment type="tissue specificity">
    <text evidence="6">Expressed in colon tumor tissue and in adjacent normal colonic mucosa.</text>
</comment>
<comment type="developmental stage">
    <text evidence="6">No difference between normal colonic mucosa and colon tumor tissue in mRNA expression, whereas the protein is expressed 1.5-fold more in normal colonic mucosa that in colon tumor tissue.</text>
</comment>
<comment type="caution">
    <text evidence="13">There are 3 copies of the NOMO gene on chromosome 16p12-p13: NOMO1, NOMO2 (AC Q5JPE7) and NOMO3 (AC P69849). All 3 are extremely similar, which makes their individual characterization difficult. Thus, most experiments probably do not discriminate between the different members. Moreover, it does not allow a clear view of which variant belongs to which of the 3 copies. The results reported in other entries may therefore apply for this protein.</text>
</comment>
<sequence>MLVGQGAGPLGPAVVTAAVVLLLSGVGPAHGSEDIVVGCGGFVKSDVEINYSLIEIKLYTKHGTLKYQTDCAPNNGYFMIPLYDKGDFILKIEPPLGWSFEPTTVELHVDGVSDICTKGGDINFVFTGFSVNGKVLSKGQPLGPAGVQVSLRNTGTEAKIQSTVTQPGGKFAFFKVLPGDYEILATHPTWALKEASTTVRVTNSNANAASPLIVAGYNVSGSVRSDGEPMKGVKFLLFSSLVTKEDVLGCNVSPVPGFQPQDESLVYLCYTVSREDGSFSFYSLPSGGYTVIPFYRGERITFDVAPSRLDFTVEHDSLKIEPVFHVMGFSVTGRVLNGPEGDGVPEAVVTLNNQIKVKTKADGSFRLENITTGTYTIHAQKEHLYFETVTIKIAPNTPQLADIIATGFSVCGQISIIRFPDTVKQMNKYKVVLSSQDKDKSLVTVETDAHGSFCFKAKPGTYKVQVMVPEAETRAGLTLKPQTFPLTVTNRPMMDVAFVQFLASVSGKVSCLDTCGDLLVTLQSLSRQGEKRSLQLSGKVNAMTFTFDNVLPGKYKISIMHEDWCWKNKSLEVEVLEDDMSAVEFRQTGYMLRCSLSHAITLEFYQDGNGRENVGIYNLSKGVNRFCLSKPGVYKVTPRSCHRFEQAFYTYDTSSPSILTLTAIRHHVLGTITTDKMMDVTVTIKSSIDSEPALVLGPLKSVQELRREQQLAEIEARRQEREKNGNEEGEERMTKPPVQEMVDELQGPFSYDFSYWARSGEKITVTPSSKELLFYPPSMEAVVSGESCPGKLIEIHGKAGLFLEGQIHPELEGVEIVISEKGASSPLITVFTDDKGAYSVGPLHSDLEYTVTSQKEGYVLTAVEGTIGDFKAYALAGVSFEIKAEDDQPLPGVLLSLSGGLFRSNLLTQDNGILTFSNLSPGQYYFKPMMKEFRFEPSSQMIEVQEGQNLKITITGYRTAYSCYGTVSSLNGEPEQGVAMEAVGQNDCSIYGEDTVTDEEGKFRLRGLLPGCVYHVQLKAEGNDHIERALPHHRVIEVGNNDIDDVNIIVFRQINQFDLSGNVITSSEYLPTLWVKLYKSENLDNPIQTVSLGQSLFFHFPPLLRDGENYVVLLDSTLPRSQYDYILPQVSFTAVGYHKHITLIFNPTRKLPEQDIAQGSYIALPLTLLVLLAGYNHDKLIPLLLQLTSRLQGVRALGQAASDNSGPEDAKRQAKKQKTRRT</sequence>
<gene>
    <name type="primary">NOMO1</name>
    <name type="synonym">PM5</name>
</gene>
<protein>
    <recommendedName>
        <fullName evidence="13">BOS complex subunit NOMO1</fullName>
    </recommendedName>
    <alternativeName>
        <fullName>Nodal modulator 1</fullName>
    </alternativeName>
    <alternativeName>
        <fullName>pM5 protein</fullName>
    </alternativeName>
</protein>
<reference key="1">
    <citation type="journal article" date="2004" name="Nature">
        <title>The sequence and analysis of duplication-rich human chromosome 16.</title>
        <authorList>
            <person name="Martin J."/>
            <person name="Han C."/>
            <person name="Gordon L.A."/>
            <person name="Terry A."/>
            <person name="Prabhakar S."/>
            <person name="She X."/>
            <person name="Xie G."/>
            <person name="Hellsten U."/>
            <person name="Chan Y.M."/>
            <person name="Altherr M."/>
            <person name="Couronne O."/>
            <person name="Aerts A."/>
            <person name="Bajorek E."/>
            <person name="Black S."/>
            <person name="Blumer H."/>
            <person name="Branscomb E."/>
            <person name="Brown N.C."/>
            <person name="Bruno W.J."/>
            <person name="Buckingham J.M."/>
            <person name="Callen D.F."/>
            <person name="Campbell C.S."/>
            <person name="Campbell M.L."/>
            <person name="Campbell E.W."/>
            <person name="Caoile C."/>
            <person name="Challacombe J.F."/>
            <person name="Chasteen L.A."/>
            <person name="Chertkov O."/>
            <person name="Chi H.C."/>
            <person name="Christensen M."/>
            <person name="Clark L.M."/>
            <person name="Cohn J.D."/>
            <person name="Denys M."/>
            <person name="Detter J.C."/>
            <person name="Dickson M."/>
            <person name="Dimitrijevic-Bussod M."/>
            <person name="Escobar J."/>
            <person name="Fawcett J.J."/>
            <person name="Flowers D."/>
            <person name="Fotopulos D."/>
            <person name="Glavina T."/>
            <person name="Gomez M."/>
            <person name="Gonzales E."/>
            <person name="Goodstein D."/>
            <person name="Goodwin L.A."/>
            <person name="Grady D.L."/>
            <person name="Grigoriev I."/>
            <person name="Groza M."/>
            <person name="Hammon N."/>
            <person name="Hawkins T."/>
            <person name="Haydu L."/>
            <person name="Hildebrand C.E."/>
            <person name="Huang W."/>
            <person name="Israni S."/>
            <person name="Jett J."/>
            <person name="Jewett P.B."/>
            <person name="Kadner K."/>
            <person name="Kimball H."/>
            <person name="Kobayashi A."/>
            <person name="Krawczyk M.-C."/>
            <person name="Leyba T."/>
            <person name="Longmire J.L."/>
            <person name="Lopez F."/>
            <person name="Lou Y."/>
            <person name="Lowry S."/>
            <person name="Ludeman T."/>
            <person name="Manohar C.F."/>
            <person name="Mark G.A."/>
            <person name="McMurray K.L."/>
            <person name="Meincke L.J."/>
            <person name="Morgan J."/>
            <person name="Moyzis R.K."/>
            <person name="Mundt M.O."/>
            <person name="Munk A.C."/>
            <person name="Nandkeshwar R.D."/>
            <person name="Pitluck S."/>
            <person name="Pollard M."/>
            <person name="Predki P."/>
            <person name="Parson-Quintana B."/>
            <person name="Ramirez L."/>
            <person name="Rash S."/>
            <person name="Retterer J."/>
            <person name="Ricke D.O."/>
            <person name="Robinson D.L."/>
            <person name="Rodriguez A."/>
            <person name="Salamov A."/>
            <person name="Saunders E.H."/>
            <person name="Scott D."/>
            <person name="Shough T."/>
            <person name="Stallings R.L."/>
            <person name="Stalvey M."/>
            <person name="Sutherland R.D."/>
            <person name="Tapia R."/>
            <person name="Tesmer J.G."/>
            <person name="Thayer N."/>
            <person name="Thompson L.S."/>
            <person name="Tice H."/>
            <person name="Torney D.C."/>
            <person name="Tran-Gyamfi M."/>
            <person name="Tsai M."/>
            <person name="Ulanovsky L.E."/>
            <person name="Ustaszewska A."/>
            <person name="Vo N."/>
            <person name="White P.S."/>
            <person name="Williams A.L."/>
            <person name="Wills P.L."/>
            <person name="Wu J.-R."/>
            <person name="Wu K."/>
            <person name="Yang J."/>
            <person name="DeJong P."/>
            <person name="Bruce D."/>
            <person name="Doggett N.A."/>
            <person name="Deaven L."/>
            <person name="Schmutz J."/>
            <person name="Grimwood J."/>
            <person name="Richardson P."/>
            <person name="Rokhsar D.S."/>
            <person name="Eichler E.E."/>
            <person name="Gilna P."/>
            <person name="Lucas S.M."/>
            <person name="Myers R.M."/>
            <person name="Rubin E.M."/>
            <person name="Pennacchio L.A."/>
        </authorList>
    </citation>
    <scope>NUCLEOTIDE SEQUENCE [LARGE SCALE GENOMIC DNA]</scope>
</reference>
<reference key="2">
    <citation type="journal article" date="2004" name="Genome Res.">
        <title>The status, quality, and expansion of the NIH full-length cDNA project: the Mammalian Gene Collection (MGC).</title>
        <authorList>
            <consortium name="The MGC Project Team"/>
        </authorList>
    </citation>
    <scope>NUCLEOTIDE SEQUENCE [LARGE SCALE MRNA]</scope>
    <scope>VARIANT ALA-583</scope>
    <source>
        <tissue>Lung</tissue>
    </source>
</reference>
<reference key="3">
    <citation type="journal article" date="1992" name="Genomics">
        <title>Cloning and characterization of a novel human cDNA that has DNA similarity to the conserved region of the collagenase gene family.</title>
        <authorList>
            <person name="Templeton N.S."/>
            <person name="Rodgers L.A."/>
            <person name="Levy A.T."/>
            <person name="Ting K.-L."/>
            <person name="Krutzsch H.C."/>
            <person name="Liotta L.A."/>
            <person name="Stetler-Stevenson W.G."/>
        </authorList>
    </citation>
    <scope>NUCLEOTIDE SEQUENCE [MRNA] OF 33-1222</scope>
    <scope>DEVELOPMENTAL STAGE</scope>
    <scope>TISSUE SPECIFICITY</scope>
    <source>
        <tissue>Melanoma</tissue>
    </source>
</reference>
<reference key="4">
    <citation type="journal article" date="2009" name="J. Proteome Res.">
        <title>Glycoproteomics analysis of human liver tissue by combination of multiple enzyme digestion and hydrazide chemistry.</title>
        <authorList>
            <person name="Chen R."/>
            <person name="Jiang X."/>
            <person name="Sun D."/>
            <person name="Han G."/>
            <person name="Wang F."/>
            <person name="Ye M."/>
            <person name="Wang L."/>
            <person name="Zou H."/>
        </authorList>
    </citation>
    <scope>GLYCOSYLATION [LARGE SCALE ANALYSIS] AT ASN-618</scope>
    <source>
        <tissue>Liver</tissue>
    </source>
</reference>
<reference key="5">
    <citation type="journal article" date="2007" name="J. Biol. Chem.">
        <title>The Nicastrin-like protein Nicalin regulates assembly and stability of the Nicalin-nodal modulator (NOMO) membrane protein complex.</title>
        <authorList>
            <person name="Haffner C."/>
            <person name="Dettmer U."/>
            <person name="Weiler T."/>
            <person name="Haass C."/>
        </authorList>
    </citation>
    <scope>INTERACTION WITH NCLN</scope>
    <scope>SUBCELLULAR LOCATION</scope>
</reference>
<reference key="6">
    <citation type="journal article" date="2010" name="J. Biol. Chem.">
        <title>Transmembrane protein 147 (TMEM147) is a novel component of the Nicalin-NOMO protein complex.</title>
        <authorList>
            <person name="Dettmer U."/>
            <person name="Kuhn P.H."/>
            <person name="Abou-Ajram C."/>
            <person name="Lichtenthaler S.F."/>
            <person name="Kruger M."/>
            <person name="Kremmer E."/>
            <person name="Haass C."/>
            <person name="Haffner C."/>
        </authorList>
    </citation>
    <scope>INTERACTION WITH NCLN AND TMEM147</scope>
</reference>
<reference key="7">
    <citation type="journal article" date="2020" name="Elife">
        <title>An ER translocon for multi-pass membrane protein biogenesis.</title>
        <authorList>
            <person name="McGilvray P.T."/>
            <person name="Anghel S.A."/>
            <person name="Sundaram A."/>
            <person name="Zhong F."/>
            <person name="Trnka M.J."/>
            <person name="Fuller J.R."/>
            <person name="Hu H."/>
            <person name="Burlingame A.L."/>
            <person name="Keenan R.J."/>
        </authorList>
    </citation>
    <scope>FUNCTION</scope>
    <scope>INTERACTION WITH TMCO1; CCDC47; NCLN; TMEM147; SEC61A1; SEC61B AND SEC61G</scope>
</reference>
<reference key="8">
    <citation type="journal article" date="2022" name="Nature">
        <title>Substrate-driven assembly of a translocon for multipass membrane proteins.</title>
        <authorList>
            <person name="Sundaram A."/>
            <person name="Yamsek M."/>
            <person name="Zhong F."/>
            <person name="Hooda Y."/>
            <person name="Hegde R.S."/>
            <person name="Keenan R.J."/>
        </authorList>
    </citation>
    <scope>FUNCTION</scope>
    <scope>IDENTIFICATION IN THE MULTI-PASS TRANSLOCON COMPLEX</scope>
    <scope>SUBCELLULAR LOCATION</scope>
</reference>
<reference key="9">
    <citation type="journal article" date="2000" name="Nat. Genet.">
        <title>Mutations in a gene encoding an ABC transporter cause pseudoxanthoma elasticum.</title>
        <authorList>
            <person name="Le Saux O."/>
            <person name="Urban Z."/>
            <person name="Tschuch C."/>
            <person name="Csiszar K."/>
            <person name="Bacchelli B."/>
            <person name="Quaglino D."/>
            <person name="Pasquali-Ronchetti I."/>
            <person name="Pope F.M."/>
            <person name="Richards A."/>
            <person name="Terry S."/>
            <person name="Bercovitch L."/>
            <person name="de Paepe A."/>
            <person name="Boyd C.D."/>
        </authorList>
    </citation>
    <scope>VARIANT LYS-1081</scope>
</reference>
<reference key="10">
    <citation type="journal article" date="2001" name="Hum. Mutat.">
        <title>Identification of novel polymorphisms in the pM5 and MRP1 (ABCC1) genes at locus 16p13.1 and exclusion of both genes as responsible for pseudoxanthoma elasticum.</title>
        <authorList>
            <person name="Perdu J."/>
            <person name="Germain D.P."/>
        </authorList>
    </citation>
    <scope>VARIANTS VAL-404; ASN-458; ASP-490; PHE-1141 AND GLY-1195</scope>
</reference>
<feature type="signal peptide" evidence="2">
    <location>
        <begin position="1"/>
        <end position="31"/>
    </location>
</feature>
<feature type="chain" id="PRO_0000021819" description="BOS complex subunit NOMO1">
    <location>
        <begin position="32"/>
        <end position="1222"/>
    </location>
</feature>
<feature type="topological domain" description="Extracellular" evidence="2">
    <location>
        <begin position="32"/>
        <end position="1155"/>
    </location>
</feature>
<feature type="transmembrane region" description="Helical" evidence="2">
    <location>
        <begin position="1156"/>
        <end position="1176"/>
    </location>
</feature>
<feature type="topological domain" description="Cytoplasmic" evidence="2">
    <location>
        <begin position="1177"/>
        <end position="1222"/>
    </location>
</feature>
<feature type="region of interest" description="Disordered" evidence="3">
    <location>
        <begin position="1198"/>
        <end position="1222"/>
    </location>
</feature>
<feature type="compositionally biased region" description="Basic residues" evidence="3">
    <location>
        <begin position="1213"/>
        <end position="1222"/>
    </location>
</feature>
<feature type="modified residue" description="Phosphoserine" evidence="1">
    <location>
        <position position="1205"/>
    </location>
</feature>
<feature type="glycosylation site" description="N-linked (GlcNAc...) asparagine" evidence="2">
    <location>
        <position position="50"/>
    </location>
</feature>
<feature type="glycosylation site" description="N-linked (GlcNAc...) asparagine" evidence="2">
    <location>
        <position position="218"/>
    </location>
</feature>
<feature type="glycosylation site" description="N-linked (GlcNAc...) asparagine" evidence="9">
    <location>
        <position position="618"/>
    </location>
</feature>
<feature type="sequence variant" id="VAR_013312" description="In dbSNP:rs2561962." evidence="5">
    <original>I</original>
    <variation>V</variation>
    <location>
        <position position="404"/>
    </location>
</feature>
<feature type="sequence variant" id="VAR_013313" description="In dbSNP:rs1345150579." evidence="5">
    <original>K</original>
    <variation>N</variation>
    <location>
        <position position="458"/>
    </location>
</feature>
<feature type="sequence variant" id="VAR_013314" description="In dbSNP:rs1062412." evidence="5">
    <original>N</original>
    <variation>D</variation>
    <location>
        <position position="490"/>
    </location>
</feature>
<feature type="sequence variant" id="VAR_022551" description="In dbSNP:rs141860762.">
    <original>M</original>
    <variation>V</variation>
    <location>
        <position position="493"/>
    </location>
</feature>
<feature type="sequence variant" id="VAR_056956" description="In dbSNP:rs17356851.">
    <original>M</original>
    <variation>V</variation>
    <location>
        <position position="580"/>
    </location>
</feature>
<feature type="sequence variant" id="VAR_060370" description="In dbSNP:rs17855981." evidence="7">
    <original>V</original>
    <variation>A</variation>
    <location>
        <position position="583"/>
    </location>
</feature>
<feature type="sequence variant" id="VAR_011496" description="In dbSNP:rs200317822." evidence="4">
    <original>E</original>
    <variation>K</variation>
    <location>
        <position position="1081"/>
    </location>
</feature>
<feature type="sequence variant" id="VAR_013315" description="In dbSNP:rs376397163." evidence="5">
    <original>I</original>
    <variation>F</variation>
    <location>
        <position position="1141"/>
    </location>
</feature>
<feature type="sequence variant" id="VAR_013316" description="In dbSNP:rs9330." evidence="5">
    <original>R</original>
    <variation>G</variation>
    <location>
        <position position="1195"/>
    </location>
</feature>
<feature type="sequence conflict" description="In Ref. 3; CAA40655." evidence="13" ref="3">
    <original>EDI</original>
    <variation>RDL</variation>
    <location>
        <begin position="33"/>
        <end position="35"/>
    </location>
</feature>
<feature type="sequence conflict" description="In Ref. 3; CAA40655." evidence="13" ref="3">
    <original>R</original>
    <variation>S</variation>
    <location>
        <position position="200"/>
    </location>
</feature>
<feature type="sequence conflict" description="In Ref. 3; CAA40655." evidence="13" ref="3">
    <original>D</original>
    <variation>N</variation>
    <location>
        <position position="513"/>
    </location>
</feature>
<feature type="sequence conflict" description="In Ref. 3; CAA40655." evidence="13" ref="3">
    <original>N</original>
    <variation>S</variation>
    <location>
        <position position="618"/>
    </location>
</feature>
<feature type="sequence conflict" description="In Ref. 3; CAA40655." evidence="13" ref="3">
    <original>S</original>
    <variation>F</variation>
    <location>
        <position position="620"/>
    </location>
</feature>
<feature type="sequence conflict" description="In Ref. 3; CAA40655." evidence="13" ref="3">
    <original>T</original>
    <variation>I</variation>
    <location>
        <position position="650"/>
    </location>
</feature>
<feature type="sequence conflict" description="In Ref. 3; CAA40655." evidence="13" ref="3">
    <original>L</original>
    <variation>F</variation>
    <location>
        <position position="659"/>
    </location>
</feature>
<feature type="sequence conflict" description="In Ref. 3; CAA40655." evidence="13" ref="3">
    <original>I</original>
    <variation>T</variation>
    <location>
        <position position="1141"/>
    </location>
</feature>
<feature type="sequence conflict" description="In Ref. 2; AAH65535." evidence="13" ref="2">
    <original>A</original>
    <variation>V</variation>
    <location>
        <position position="1196"/>
    </location>
</feature>
<organism>
    <name type="scientific">Homo sapiens</name>
    <name type="common">Human</name>
    <dbReference type="NCBI Taxonomy" id="9606"/>
    <lineage>
        <taxon>Eukaryota</taxon>
        <taxon>Metazoa</taxon>
        <taxon>Chordata</taxon>
        <taxon>Craniata</taxon>
        <taxon>Vertebrata</taxon>
        <taxon>Euteleostomi</taxon>
        <taxon>Mammalia</taxon>
        <taxon>Eutheria</taxon>
        <taxon>Euarchontoglires</taxon>
        <taxon>Primates</taxon>
        <taxon>Haplorrhini</taxon>
        <taxon>Catarrhini</taxon>
        <taxon>Hominidae</taxon>
        <taxon>Homo</taxon>
    </lineage>
</organism>
<accession>Q15155</accession>
<accession>P78421</accession>
<accession>Q8IW21</accession>
<accession>Q96DG0</accession>
<dbReference type="EMBL" id="AC136443">
    <property type="status" value="NOT_ANNOTATED_CDS"/>
    <property type="molecule type" value="Genomic_DNA"/>
</dbReference>
<dbReference type="EMBL" id="BC065535">
    <property type="protein sequence ID" value="AAH65535.1"/>
    <property type="molecule type" value="mRNA"/>
</dbReference>
<dbReference type="EMBL" id="X57398">
    <property type="protein sequence ID" value="CAA40655.1"/>
    <property type="molecule type" value="mRNA"/>
</dbReference>
<dbReference type="CCDS" id="CCDS10556.1"/>
<dbReference type="PIR" id="S21977">
    <property type="entry name" value="S21977"/>
</dbReference>
<dbReference type="RefSeq" id="NP_055102.3">
    <property type="nucleotide sequence ID" value="NM_014287.3"/>
</dbReference>
<dbReference type="SMR" id="Q15155"/>
<dbReference type="BioGRID" id="116991">
    <property type="interactions" value="221"/>
</dbReference>
<dbReference type="ComplexPortal" id="CPX-8021">
    <property type="entry name" value="BOS complex, NOMO1 variant"/>
</dbReference>
<dbReference type="CORUM" id="Q15155"/>
<dbReference type="FunCoup" id="Q15155">
    <property type="interactions" value="771"/>
</dbReference>
<dbReference type="IntAct" id="Q15155">
    <property type="interactions" value="147"/>
</dbReference>
<dbReference type="MINT" id="Q15155"/>
<dbReference type="STRING" id="9606.ENSP00000287667"/>
<dbReference type="DrugBank" id="DB00277">
    <property type="generic name" value="Theophylline"/>
</dbReference>
<dbReference type="GlyConnect" id="1572">
    <property type="glycosylation" value="8 N-Linked glycans (3 sites)"/>
</dbReference>
<dbReference type="GlyCosmos" id="Q15155">
    <property type="glycosylation" value="4 sites, 8 glycans"/>
</dbReference>
<dbReference type="GlyGen" id="Q15155">
    <property type="glycosylation" value="7 sites, 11 N-linked glycans (4 sites), 1 O-linked glycan (1 site)"/>
</dbReference>
<dbReference type="iPTMnet" id="Q15155"/>
<dbReference type="PhosphoSitePlus" id="Q15155"/>
<dbReference type="SwissPalm" id="Q15155"/>
<dbReference type="BioMuta" id="NOMO1"/>
<dbReference type="DMDM" id="296439497"/>
<dbReference type="jPOST" id="Q15155"/>
<dbReference type="MassIVE" id="Q15155"/>
<dbReference type="PaxDb" id="9606-ENSP00000287667"/>
<dbReference type="PeptideAtlas" id="Q15155"/>
<dbReference type="ProteomicsDB" id="60474"/>
<dbReference type="Pumba" id="Q15155"/>
<dbReference type="Antibodypedia" id="24899">
    <property type="antibodies" value="336 antibodies from 26 providers"/>
</dbReference>
<dbReference type="DNASU" id="23420"/>
<dbReference type="Ensembl" id="ENST00000287667.12">
    <property type="protein sequence ID" value="ENSP00000287667.7"/>
    <property type="gene ID" value="ENSG00000103512.16"/>
</dbReference>
<dbReference type="Ensembl" id="ENST00000619292.4">
    <property type="protein sequence ID" value="ENSP00000482008.1"/>
    <property type="gene ID" value="ENSG00000274779.4"/>
</dbReference>
<dbReference type="GeneID" id="23420"/>
<dbReference type="KEGG" id="hsa:23420"/>
<dbReference type="MANE-Select" id="ENST00000287667.12">
    <property type="protein sequence ID" value="ENSP00000287667.7"/>
    <property type="RefSeq nucleotide sequence ID" value="NM_014287.4"/>
    <property type="RefSeq protein sequence ID" value="NP_055102.3"/>
</dbReference>
<dbReference type="UCSC" id="uc002dcv.4">
    <property type="organism name" value="human"/>
</dbReference>
<dbReference type="AGR" id="HGNC:30060"/>
<dbReference type="CTD" id="23420"/>
<dbReference type="DisGeNET" id="23420"/>
<dbReference type="GeneCards" id="NOMO1"/>
<dbReference type="HGNC" id="HGNC:30060">
    <property type="gene designation" value="NOMO1"/>
</dbReference>
<dbReference type="HPA" id="ENSG00000103512">
    <property type="expression patterns" value="Tissue enhanced (pancreas)"/>
</dbReference>
<dbReference type="MIM" id="609157">
    <property type="type" value="gene"/>
</dbReference>
<dbReference type="neXtProt" id="NX_Q15155"/>
<dbReference type="OpenTargets" id="ENSG00000103512"/>
<dbReference type="PharmGKB" id="PA134934458"/>
<dbReference type="VEuPathDB" id="HostDB:ENSG00000103512"/>
<dbReference type="eggNOG" id="KOG1948">
    <property type="taxonomic scope" value="Eukaryota"/>
</dbReference>
<dbReference type="GeneTree" id="ENSGT00390000000089"/>
<dbReference type="HOGENOM" id="CLU_007543_2_0_1"/>
<dbReference type="InParanoid" id="Q15155"/>
<dbReference type="OMA" id="DIECIVY"/>
<dbReference type="OrthoDB" id="10263633at2759"/>
<dbReference type="PAN-GO" id="Q15155">
    <property type="GO annotations" value="1 GO annotation based on evolutionary models"/>
</dbReference>
<dbReference type="PhylomeDB" id="Q15155"/>
<dbReference type="TreeFam" id="TF313696"/>
<dbReference type="PathwayCommons" id="Q15155"/>
<dbReference type="SignaLink" id="Q15155"/>
<dbReference type="BioGRID-ORCS" id="23420">
    <property type="hits" value="50 hits in 1057 CRISPR screens"/>
</dbReference>
<dbReference type="ChiTaRS" id="NOMO1">
    <property type="organism name" value="human"/>
</dbReference>
<dbReference type="GeneWiki" id="NOMO1"/>
<dbReference type="GenomeRNAi" id="23420"/>
<dbReference type="Pharos" id="Q15155">
    <property type="development level" value="Tbio"/>
</dbReference>
<dbReference type="PRO" id="PR:Q15155"/>
<dbReference type="Proteomes" id="UP000005640">
    <property type="component" value="Chromosome 16"/>
</dbReference>
<dbReference type="RNAct" id="Q15155">
    <property type="molecule type" value="protein"/>
</dbReference>
<dbReference type="Bgee" id="ENSG00000103512">
    <property type="expression patterns" value="Expressed in islet of Langerhans and 100 other cell types or tissues"/>
</dbReference>
<dbReference type="ExpressionAtlas" id="Q15155">
    <property type="expression patterns" value="baseline and differential"/>
</dbReference>
<dbReference type="GO" id="GO:0005789">
    <property type="term" value="C:endoplasmic reticulum membrane"/>
    <property type="evidence" value="ECO:0000318"/>
    <property type="project" value="GO_Central"/>
</dbReference>
<dbReference type="GO" id="GO:0016020">
    <property type="term" value="C:membrane"/>
    <property type="evidence" value="ECO:0007005"/>
    <property type="project" value="UniProtKB"/>
</dbReference>
<dbReference type="GO" id="GO:0160064">
    <property type="term" value="C:multi-pass translocon complex"/>
    <property type="evidence" value="ECO:0000314"/>
    <property type="project" value="UniProtKB"/>
</dbReference>
<dbReference type="GO" id="GO:0030246">
    <property type="term" value="F:carbohydrate binding"/>
    <property type="evidence" value="ECO:0007669"/>
    <property type="project" value="InterPro"/>
</dbReference>
<dbReference type="GO" id="GO:0043022">
    <property type="term" value="F:ribosome binding"/>
    <property type="evidence" value="ECO:0000314"/>
    <property type="project" value="UniProtKB"/>
</dbReference>
<dbReference type="GO" id="GO:0160063">
    <property type="term" value="P:multi-pass transmembrane protein insertion into ER membrane"/>
    <property type="evidence" value="ECO:0000314"/>
    <property type="project" value="UniProtKB"/>
</dbReference>
<dbReference type="FunFam" id="2.60.40.1120:FF:000001">
    <property type="entry name" value="Nodal modulator 1"/>
    <property type="match status" value="1"/>
</dbReference>
<dbReference type="Gene3D" id="2.60.40.1120">
    <property type="entry name" value="Carboxypeptidase-like, regulatory domain"/>
    <property type="match status" value="1"/>
</dbReference>
<dbReference type="Gene3D" id="2.60.40.10">
    <property type="entry name" value="Immunoglobulins"/>
    <property type="match status" value="1"/>
</dbReference>
<dbReference type="InterPro" id="IPR013784">
    <property type="entry name" value="Carb-bd-like_fold"/>
</dbReference>
<dbReference type="InterPro" id="IPR008969">
    <property type="entry name" value="CarboxyPept-like_regulatory"/>
</dbReference>
<dbReference type="InterPro" id="IPR013783">
    <property type="entry name" value="Ig-like_fold"/>
</dbReference>
<dbReference type="InterPro" id="IPR055075">
    <property type="entry name" value="NOMO-like_N"/>
</dbReference>
<dbReference type="InterPro" id="IPR055074">
    <property type="entry name" value="NOMO1-3_2nd"/>
</dbReference>
<dbReference type="InterPro" id="IPR055073">
    <property type="entry name" value="NOMO1-like_9th"/>
</dbReference>
<dbReference type="InterPro" id="IPR056191">
    <property type="entry name" value="NOMO_12th"/>
</dbReference>
<dbReference type="InterPro" id="IPR056189">
    <property type="entry name" value="NOMO_3rd"/>
</dbReference>
<dbReference type="InterPro" id="IPR056190">
    <property type="entry name" value="NOMO_5th"/>
</dbReference>
<dbReference type="InterPro" id="IPR056188">
    <property type="entry name" value="NOMO_6th"/>
</dbReference>
<dbReference type="InterPro" id="IPR056319">
    <property type="entry name" value="NOMO_7th"/>
</dbReference>
<dbReference type="InterPro" id="IPR056187">
    <property type="entry name" value="NOMO_8th"/>
</dbReference>
<dbReference type="InterPro" id="IPR051417">
    <property type="entry name" value="SDr/BOS_complex"/>
</dbReference>
<dbReference type="InterPro" id="IPR041033">
    <property type="entry name" value="SpaA_PFL_dom_1"/>
</dbReference>
<dbReference type="PANTHER" id="PTHR23303:SF14">
    <property type="entry name" value="BOS COMPLEX SUBUNIT NOMO1-RELATED"/>
    <property type="match status" value="1"/>
</dbReference>
<dbReference type="PANTHER" id="PTHR23303">
    <property type="entry name" value="CARBOXYPEPTIDASE REGULATORY REGION-CONTAINING"/>
    <property type="match status" value="1"/>
</dbReference>
<dbReference type="Pfam" id="PF13620">
    <property type="entry name" value="CarboxypepD_reg"/>
    <property type="match status" value="1"/>
</dbReference>
<dbReference type="Pfam" id="PF23141">
    <property type="entry name" value="Ig_NOMO"/>
    <property type="match status" value="1"/>
</dbReference>
<dbReference type="Pfam" id="PF22898">
    <property type="entry name" value="NOMO1-like_1st"/>
    <property type="match status" value="1"/>
</dbReference>
<dbReference type="Pfam" id="PF22904">
    <property type="entry name" value="NOMO1-like_2nd"/>
    <property type="match status" value="1"/>
</dbReference>
<dbReference type="Pfam" id="PF22902">
    <property type="entry name" value="NOMO1-like_9th"/>
    <property type="match status" value="1"/>
</dbReference>
<dbReference type="Pfam" id="PF23192">
    <property type="entry name" value="NOMO_12th"/>
    <property type="match status" value="1"/>
</dbReference>
<dbReference type="Pfam" id="PF23193">
    <property type="entry name" value="NOMO_3rd"/>
    <property type="match status" value="1"/>
</dbReference>
<dbReference type="Pfam" id="PF23194">
    <property type="entry name" value="NOMO_5th"/>
    <property type="match status" value="1"/>
</dbReference>
<dbReference type="Pfam" id="PF23196">
    <property type="entry name" value="NOMO_6th"/>
    <property type="match status" value="1"/>
</dbReference>
<dbReference type="Pfam" id="PF23660">
    <property type="entry name" value="NOMO_8th"/>
    <property type="match status" value="1"/>
</dbReference>
<dbReference type="Pfam" id="PF17802">
    <property type="entry name" value="SpaA"/>
    <property type="match status" value="1"/>
</dbReference>
<dbReference type="SUPFAM" id="SSF49464">
    <property type="entry name" value="Carboxypeptidase regulatory domain-like"/>
    <property type="match status" value="1"/>
</dbReference>
<dbReference type="SUPFAM" id="SSF49452">
    <property type="entry name" value="Starch-binding domain-like"/>
    <property type="match status" value="3"/>
</dbReference>